<evidence type="ECO:0000250" key="1">
    <source>
        <dbReference type="UniProtKB" id="Q9NQC7"/>
    </source>
</evidence>
<evidence type="ECO:0000255" key="2">
    <source>
        <dbReference type="PROSITE-ProRule" id="PRU00045"/>
    </source>
</evidence>
<evidence type="ECO:0000255" key="3">
    <source>
        <dbReference type="PROSITE-ProRule" id="PRU10092"/>
    </source>
</evidence>
<evidence type="ECO:0000256" key="4">
    <source>
        <dbReference type="SAM" id="MobiDB-lite"/>
    </source>
</evidence>
<evidence type="ECO:0000269" key="5">
    <source>
    </source>
</evidence>
<evidence type="ECO:0000269" key="6">
    <source>
    </source>
</evidence>
<evidence type="ECO:0000269" key="7">
    <source>
    </source>
</evidence>
<evidence type="ECO:0000269" key="8">
    <source>
    </source>
</evidence>
<evidence type="ECO:0000269" key="9">
    <source>
    </source>
</evidence>
<evidence type="ECO:0000269" key="10">
    <source>
    </source>
</evidence>
<evidence type="ECO:0000269" key="11">
    <source>
    </source>
</evidence>
<evidence type="ECO:0000269" key="12">
    <source>
    </source>
</evidence>
<evidence type="ECO:0000269" key="13">
    <source>
    </source>
</evidence>
<evidence type="ECO:0000269" key="14">
    <source>
    </source>
</evidence>
<evidence type="ECO:0000269" key="15">
    <source>
    </source>
</evidence>
<evidence type="ECO:0000269" key="16">
    <source>
    </source>
</evidence>
<evidence type="ECO:0000303" key="17">
    <source>
    </source>
</evidence>
<evidence type="ECO:0000305" key="18"/>
<evidence type="ECO:0000305" key="19">
    <source>
    </source>
</evidence>
<evidence type="ECO:0007744" key="20">
    <source>
    </source>
</evidence>
<gene>
    <name type="primary">Cyld</name>
    <name type="synonym">Cyld1</name>
    <name type="synonym">Kiaa0849</name>
</gene>
<sequence>MSSGLWSQEKVTSPYWEERIFYLLLQECSVTDKQTQKLLKVPKGSIGQYIQDRSVGHSRVPSTKGKKNQIGLKILEQPHAVLFVDEKDVVEINEKFTELLLAITNCEERLSLFRNRLRLSKGLQVDVGSPVKVQLRSGEEKFPGVVRFRGPLLAERTVSGIFFGVELLEEGRGQGFTDGVYQGKQLFQCDEDCGVFVALDKLELIEDDDNGLESDFAGPGDTMQVEPPPLEINSRVSLKVGESTESGTVIFCDVLPGKESLGYFVGVDMDNPIGNWDGRFDGVQLCSFASVESTILLHINDIIPDSVTQERRPPKLAFMSRGVGDKGSSSHNKPKVTGSTSDPGSRNRSELFYTLNGSSVDSQQSKSKNPWYIDEVAEDPAKSLTEMSSDFGHSSPPPQPPSMNSLSSENRFHSLPFSLTKMPNTNGSMAHSPLSLSVQSVMGELNSTPVQESPPLPISSGNAHGLEVGSLAEVKENPPFYGVIRWIGQPPGLSDVLAGLELEDECAGCTDGTFRGTRYFTCALKKALFVKLKSCRPDSRFASLQPVSNQIERCNSLAFGGYLSEVVEENTPPKMEKEGLEIMIGKKKGIQGHYNSCYLDSTLFCLFAFSSALDTVLLRPKEKNDIEYYSETQELLRTEIVNPLRIYGYVCATKIMKLRKILEKVEAASGFTSEEKDPEEFLNILFHDILRVEPLLKIRSAGQKVQDCNFYQIFMEKNEKVGVPTIQQLLEWSFINSNLKFAEAPSCLIIQMPRFGKDFKLFKKIFPSLELNITDLLEDTPRQCRICGGLAMYECRECYDDPDISAGKIKQFCKTCSTQVHLHPRRLNHSYHPVSLPKDLPDWDWRHGCIPCQKMELFAVLCIETSHYVAFVKYGKDDSAWLFFDSMADRDGGQNGFNIPQVTPCPEVGEYLKMSLEDLHSLDSRRIQGCARRLLCDAYMCMYQSPTMSLYK</sequence>
<name>CYLD_MOUSE</name>
<comment type="function">
    <text evidence="1 5 6 7 8 9 10 11 12 13 14 15 16">Deubiquitinase that specifically cleaves 'Lys-63'- and linear 'Met-1'-linked polyubiquitin chains and is involved in NF-kappa-B activation and TNF-alpha-induced necroptosis (PubMed:17548520, PubMed:28701375, PubMed:29291351, PubMed:32185393, PubMed:32424362). Negatively regulates NF-kappa-B activation by deubiquitinating upstream signaling factors (PubMed:16713561). Contributes to the regulation of cell survival, proliferation and differentiation via its effects on NF-kappa-B activation (PubMed:16713561). Negative regulator of Wnt signaling. Inhibits HDAC6 and thereby promotes acetylation of alpha-tubulin and stabilization of microtubules (PubMed:19893491). Plays a role in the regulation of microtubule dynamics, and thereby contributes to the regulation of cell proliferation, cell polarization, cell migration, and angiogenesis (PubMed:16713561, PubMed:19893491, PubMed:20194890). Required for normal cell cycle progress and normal cytokinesis (PubMed:19893491). Inhibits nuclear translocation of NF-kappa-B (By similarity). Plays a role in the regulation of inflammation and the innate immune response, via its effects on NF-kappa-B activation (By similarity). Dispensable for the maturation of intrathymic natural killer cells, but required for the continued survival of immature natural killer cells (PubMed:16501569, PubMed:18643924). Negatively regulates TNFRSF11A signaling and osteoclastogenesis (PubMed:18382763). Involved in the regulation of ciliogenesis, allowing ciliary basal bodies to migrate and dock to the plasma membrane; this process does not depend on NF-kappa-B activation (PubMed:25134987). Ability to remove linear ('Met-1'-linked) polyubiquitin chains regulates innate immunity and TNF-alpha-induced necroptosis: recruited to the LUBAC complex via interaction with SPATA2 and restricts linear polyubiquitin formation on target proteins (PubMed:28701375). Regulates innate immunity by restricting linear polyubiquitin formation on RIPK2 in response to NOD2 stimulation (By similarity). Involved in TNF-alpha-induced necroptosis by removing linear ('Met-1'-linked) polyubiquitin chains from RIPK1, thereby regulating the kinase activity of RIPK1 (PubMed:28701375). Negatively regulates intestinal inflammation by removing 'Lys-63' linked polyubiquitin chain of NLRP6, thereby reducing the interaction between NLRP6 and PYCARD/ASC and formation of the NLRP6 inflammasome (PubMed:32424362). Does not catalyze deubiquitination of heterotypic 'Lys-63'-/'Lys-48'-linked branched ubiquitin chains (By similarity). Removes 'Lys-63' linked polyubiquitin chain of MAP3K7, which inhibits phosphorylation and blocks downstream activation of the JNK-p38 kinase cascades (PubMed:17548520, PubMed:29291351). Also removes 'Lys-63'-linked polyubiquitin chains of MAP3K1 and MA3P3K3, which inhibit their interaction with MAP2K1 and MAP2K2 (By similarity).</text>
</comment>
<comment type="catalytic activity">
    <reaction evidence="16">
        <text>Thiol-dependent hydrolysis of ester, thioester, amide, peptide and isopeptide bonds formed by the C-terminal Gly of ubiquitin (a 76-residue protein attached to proteins as an intracellular targeting signal).</text>
        <dbReference type="EC" id="3.4.19.12"/>
    </reaction>
</comment>
<comment type="subunit">
    <text evidence="1 6 7 8 10">Interacts (via CAP-Gly domain) with IKBKG/NEMO (via proline-rich C-terminal region) (By similarity). Interacts with TRAF2 and TRIP (By similarity). Interacts with PLK1, DVL1, DVL3, MAVS, TBK1, IKKE and RIGI (By similarity). Interacts (via CAP-Gly domain) with microtubules (PubMed:19893491). Interacts with HDAC6 and BCL3 (PubMed:16713561, PubMed:19893491). Interacts with MAP3K7 (PubMed:17548520). Identified in a complex with TRAF6 and SQSTM1 (PubMed:18382763). Interacts with OPTN and SQSTM1 (By similarity). Interacts with CEP350 (By similarity). Interacts with RNF31; the interaction is indirect and is mediated via SPATA2 (By similarity). Interacts with SPATA2 (via the PUB domain); the interaction is direct and recruits CYLD to the LUBAC complex, thereby regulating TNF-alpha-induced necroptosis (By similarity).</text>
</comment>
<comment type="interaction">
    <interactant intactId="EBI-943859">
        <id>Q80TQ2</id>
    </interactant>
    <interactant intactId="EBI-943884">
        <id>Q9Z2F6</id>
        <label>Bcl3</label>
    </interactant>
    <organismsDiffer>false</organismsDiffer>
    <experiments>5</experiments>
</comment>
<comment type="interaction">
    <interactant intactId="EBI-943859">
        <id>Q80TQ2</id>
    </interactant>
    <interactant intactId="EBI-1009256">
        <id>Q9Z2V5</id>
        <label>Hdac6</label>
    </interactant>
    <organismsDiffer>false</organismsDiffer>
    <experiments>3</experiments>
</comment>
<comment type="interaction">
    <interactant intactId="EBI-943859">
        <id>Q80TQ2</id>
    </interactant>
    <interactant intactId="EBI-851782">
        <id>Q8C863</id>
        <label>Itch</label>
    </interactant>
    <organismsDiffer>false</organismsDiffer>
    <experiments>2</experiments>
</comment>
<comment type="interaction">
    <interactant intactId="EBI-943859">
        <id>Q80TQ2</id>
    </interactant>
    <interactant intactId="EBI-400542">
        <id>P68369</id>
        <label>Tuba1a</label>
    </interactant>
    <organismsDiffer>false</organismsDiffer>
    <experiments>5</experiments>
</comment>
<comment type="subcellular location">
    <subcellularLocation>
        <location>Cytoplasm</location>
    </subcellularLocation>
    <subcellularLocation>
        <location>Cytoplasm</location>
        <location>Perinuclear region</location>
    </subcellularLocation>
    <subcellularLocation>
        <location>Cytoplasm</location>
        <location>Cytoskeleton</location>
    </subcellularLocation>
    <subcellularLocation>
        <location evidence="1">Cell membrane</location>
        <topology evidence="1">Peripheral membrane protein</topology>
        <orientation evidence="1">Cytoplasmic side</orientation>
    </subcellularLocation>
    <subcellularLocation>
        <location evidence="1">Cytoplasm</location>
        <location evidence="1">Cytoskeleton</location>
        <location evidence="1">Microtubule organizing center</location>
        <location evidence="1">Centrosome</location>
    </subcellularLocation>
    <subcellularLocation>
        <location evidence="1">Cytoplasm</location>
        <location evidence="1">Cytoskeleton</location>
        <location evidence="1">Spindle</location>
    </subcellularLocation>
    <subcellularLocation>
        <location evidence="12">Cytoplasm</location>
        <location evidence="12">Cytoskeleton</location>
        <location evidence="12">Cilium basal body</location>
    </subcellularLocation>
    <text evidence="1 12">Detected at the microtubule cytoskeleton during interphase (By similarity). Detected at the midbody during telophase (By similarity). During metaphase, it remains localized to the centrosome but is also present along the spindle (By similarity).</text>
</comment>
<comment type="alternative products">
    <event type="alternative splicing"/>
    <isoform>
        <id>Q80TQ2-1</id>
        <name>2</name>
        <sequence type="displayed"/>
    </isoform>
    <isoform>
        <id>Q80TQ2-2</id>
        <name>1</name>
        <sequence type="described" ref="VSP_011278"/>
    </isoform>
    <isoform>
        <id>Q80TQ2-3</id>
        <name>3</name>
        <sequence type="described" ref="VSP_011279 VSP_011280"/>
    </isoform>
</comment>
<comment type="induction">
    <text evidence="8">Up-regulated by TNFRSF11A.</text>
</comment>
<comment type="PTM">
    <text evidence="1">Phosphorylated on several serine residues by IKKA and/or IKKB in response to immune stimuli. Phosphorylation requires IKBKG. Phosphorylation abolishes TRAF2 deubiquitination, interferes with the activation of Jun kinases, and strongly reduces CD40-dependent gene activation by NF-kappa-B (By similarity).</text>
</comment>
<comment type="PTM">
    <text evidence="14">Ubiquitinated. Polyubiquitinated in hepatocytes treated with palmitic acid. Ubiquitination is mediated by E3 ligase TRIM47 and leads to proteasomal degradation.</text>
</comment>
<comment type="disruption phenotype">
    <text evidence="5 6 7 8 9 14 16">No obvious phenotype, but mice are highly susceptible to carcinogens and are prone to chemically induced skin tumors (PubMed:16501569, PubMed:16713561, PubMed:17548520, PubMed:18382763, PubMed:18643924). The number of natural killer T-cells is much reduced (PubMed:16501569, PubMed:16713561, PubMed:17548520, PubMed:18382763, PubMed:18643924). Animals are highly susceptible to bacteria-induced pneumonia, due to an over active innate immune response (PubMed:16501569, PubMed:16713561, PubMed:17548520, PubMed:18382763, PubMed:18643924). Mice are more susceptible to C.rodentium infection, leading to severe inflammation in the intestine (PubMed:32424362). Animals spontaneously develop colonic inflammation, due to constitutive expression of several pro-inflammatory genes in the colon (PubMed:16501569, PubMed:16713561, PubMed:17548520, PubMed:18382763, PubMed:18643924). Animals exhibit abnormal osteoclast differentiation, leading to osteoporosis (PubMed:16501569, PubMed:16713561, PubMed:17548520, PubMed:18382763, PubMed:18643924). Hepatocyte-specific knockout mice do not exhibit any liver-related pathological phenotype under unstressed conditions (PubMed:29291351). In response to a 24-week high fat dier, they exhibit higher body and liver weight as well as reduced glucose tolerance and insulin resistance compared to controls (PubMed:29291351). They also show a considerable inflammatory response, including elevation of cytokine and chemokine concentrations in serum and mRNA expression in liver (PubMed:29291351).</text>
</comment>
<comment type="similarity">
    <text evidence="18">Belongs to the peptidase C19 family.</text>
</comment>
<comment type="sequence caution" evidence="18">
    <conflict type="erroneous initiation">
        <sequence resource="EMBL-CDS" id="BAC65671"/>
    </conflict>
    <text>Extended N-terminus.</text>
</comment>
<organism>
    <name type="scientific">Mus musculus</name>
    <name type="common">Mouse</name>
    <dbReference type="NCBI Taxonomy" id="10090"/>
    <lineage>
        <taxon>Eukaryota</taxon>
        <taxon>Metazoa</taxon>
        <taxon>Chordata</taxon>
        <taxon>Craniata</taxon>
        <taxon>Vertebrata</taxon>
        <taxon>Euteleostomi</taxon>
        <taxon>Mammalia</taxon>
        <taxon>Eutheria</taxon>
        <taxon>Euarchontoglires</taxon>
        <taxon>Glires</taxon>
        <taxon>Rodentia</taxon>
        <taxon>Myomorpha</taxon>
        <taxon>Muroidea</taxon>
        <taxon>Muridae</taxon>
        <taxon>Murinae</taxon>
        <taxon>Mus</taxon>
        <taxon>Mus</taxon>
    </lineage>
</organism>
<dbReference type="EC" id="3.4.19.12" evidence="16"/>
<dbReference type="EMBL" id="AK122389">
    <property type="protein sequence ID" value="BAC65671.1"/>
    <property type="status" value="ALT_INIT"/>
    <property type="molecule type" value="mRNA"/>
</dbReference>
<dbReference type="EMBL" id="AK039054">
    <property type="protein sequence ID" value="BAC30222.1"/>
    <property type="molecule type" value="mRNA"/>
</dbReference>
<dbReference type="EMBL" id="AK042764">
    <property type="protein sequence ID" value="BAC31357.1"/>
    <property type="molecule type" value="mRNA"/>
</dbReference>
<dbReference type="EMBL" id="BC042438">
    <property type="protein sequence ID" value="AAH42438.1"/>
    <property type="molecule type" value="mRNA"/>
</dbReference>
<dbReference type="EMBL" id="BC049879">
    <property type="protein sequence ID" value="AAH49879.1"/>
    <property type="molecule type" value="mRNA"/>
</dbReference>
<dbReference type="CCDS" id="CCDS22513.1">
    <molecule id="Q80TQ2-1"/>
</dbReference>
<dbReference type="CCDS" id="CCDS52633.1">
    <molecule id="Q80TQ2-2"/>
</dbReference>
<dbReference type="RefSeq" id="NP_001121642.1">
    <molecule id="Q80TQ2-2"/>
    <property type="nucleotide sequence ID" value="NM_001128170.2"/>
</dbReference>
<dbReference type="RefSeq" id="NP_001121643.1">
    <molecule id="Q80TQ2-1"/>
    <property type="nucleotide sequence ID" value="NM_001128171.2"/>
</dbReference>
<dbReference type="RefSeq" id="NP_775545.1">
    <molecule id="Q80TQ2-1"/>
    <property type="nucleotide sequence ID" value="NM_173369.3"/>
</dbReference>
<dbReference type="RefSeq" id="XP_006531477.1">
    <molecule id="Q80TQ2-2"/>
    <property type="nucleotide sequence ID" value="XM_006531414.3"/>
</dbReference>
<dbReference type="RefSeq" id="XP_006531478.1">
    <molecule id="Q80TQ2-2"/>
    <property type="nucleotide sequence ID" value="XM_006531415.2"/>
</dbReference>
<dbReference type="RefSeq" id="XP_006531479.1">
    <molecule id="Q80TQ2-2"/>
    <property type="nucleotide sequence ID" value="XM_006531416.5"/>
</dbReference>
<dbReference type="RefSeq" id="XP_006531480.1">
    <molecule id="Q80TQ2-2"/>
    <property type="nucleotide sequence ID" value="XM_006531417.4"/>
</dbReference>
<dbReference type="RefSeq" id="XP_006531481.1">
    <molecule id="Q80TQ2-2"/>
    <property type="nucleotide sequence ID" value="XM_006531418.4"/>
</dbReference>
<dbReference type="RefSeq" id="XP_011246825.1">
    <molecule id="Q80TQ2-2"/>
    <property type="nucleotide sequence ID" value="XM_011248523.4"/>
</dbReference>
<dbReference type="RefSeq" id="XP_011246826.1">
    <molecule id="Q80TQ2-2"/>
    <property type="nucleotide sequence ID" value="XM_011248524.3"/>
</dbReference>
<dbReference type="RefSeq" id="XP_011246827.1">
    <molecule id="Q80TQ2-2"/>
    <property type="nucleotide sequence ID" value="XM_011248525.4"/>
</dbReference>
<dbReference type="RefSeq" id="XP_017168478.1">
    <property type="nucleotide sequence ID" value="XM_017312989.1"/>
</dbReference>
<dbReference type="RefSeq" id="XP_030099667.1">
    <molecule id="Q80TQ2-1"/>
    <property type="nucleotide sequence ID" value="XM_030243807.1"/>
</dbReference>
<dbReference type="RefSeq" id="XP_030099668.1">
    <molecule id="Q80TQ2-1"/>
    <property type="nucleotide sequence ID" value="XM_030243808.1"/>
</dbReference>
<dbReference type="RefSeq" id="XP_030099669.1">
    <molecule id="Q80TQ2-1"/>
    <property type="nucleotide sequence ID" value="XM_030243809.1"/>
</dbReference>
<dbReference type="RefSeq" id="XP_030099671.1">
    <molecule id="Q80TQ2-1"/>
    <property type="nucleotide sequence ID" value="XM_030243811.1"/>
</dbReference>
<dbReference type="RefSeq" id="XP_030099672.1">
    <molecule id="Q80TQ2-1"/>
    <property type="nucleotide sequence ID" value="XM_030243812.2"/>
</dbReference>
<dbReference type="RefSeq" id="XP_036010220.1">
    <molecule id="Q80TQ2-1"/>
    <property type="nucleotide sequence ID" value="XM_036154327.1"/>
</dbReference>
<dbReference type="SMR" id="Q80TQ2"/>
<dbReference type="BioGRID" id="216612">
    <property type="interactions" value="28"/>
</dbReference>
<dbReference type="DIP" id="DIP-35656N"/>
<dbReference type="FunCoup" id="Q80TQ2">
    <property type="interactions" value="2296"/>
</dbReference>
<dbReference type="IntAct" id="Q80TQ2">
    <property type="interactions" value="8"/>
</dbReference>
<dbReference type="MINT" id="Q80TQ2"/>
<dbReference type="STRING" id="10090.ENSMUSP00000147654"/>
<dbReference type="MEROPS" id="C67.001"/>
<dbReference type="GlyGen" id="Q80TQ2">
    <property type="glycosylation" value="3 sites, 1 N-linked glycan (1 site), 1 O-linked glycan (2 sites)"/>
</dbReference>
<dbReference type="iPTMnet" id="Q80TQ2"/>
<dbReference type="PhosphoSitePlus" id="Q80TQ2"/>
<dbReference type="SwissPalm" id="Q80TQ2"/>
<dbReference type="PaxDb" id="10090-ENSMUSP00000039834"/>
<dbReference type="PeptideAtlas" id="Q80TQ2"/>
<dbReference type="ProteomicsDB" id="279252">
    <molecule id="Q80TQ2-1"/>
</dbReference>
<dbReference type="ProteomicsDB" id="279253">
    <molecule id="Q80TQ2-2"/>
</dbReference>
<dbReference type="ProteomicsDB" id="279254">
    <molecule id="Q80TQ2-3"/>
</dbReference>
<dbReference type="Pumba" id="Q80TQ2"/>
<dbReference type="Antibodypedia" id="3193">
    <property type="antibodies" value="310 antibodies from 38 providers"/>
</dbReference>
<dbReference type="DNASU" id="74256"/>
<dbReference type="Ensembl" id="ENSMUST00000098519.11">
    <molecule id="Q80TQ2-2"/>
    <property type="protein sequence ID" value="ENSMUSP00000096119.5"/>
    <property type="gene ID" value="ENSMUSG00000036712.17"/>
</dbReference>
<dbReference type="Ensembl" id="ENSMUST00000109626.4">
    <molecule id="Q80TQ2-1"/>
    <property type="protein sequence ID" value="ENSMUSP00000105254.4"/>
    <property type="gene ID" value="ENSMUSG00000036712.17"/>
</dbReference>
<dbReference type="Ensembl" id="ENSMUST00000209532.2">
    <molecule id="Q80TQ2-2"/>
    <property type="protein sequence ID" value="ENSMUSP00000147654.2"/>
    <property type="gene ID" value="ENSMUSG00000036712.17"/>
</dbReference>
<dbReference type="Ensembl" id="ENSMUST00000209559.2">
    <molecule id="Q80TQ2-1"/>
    <property type="protein sequence ID" value="ENSMUSP00000147426.2"/>
    <property type="gene ID" value="ENSMUSG00000036712.17"/>
</dbReference>
<dbReference type="Ensembl" id="ENSMUST00000211554.2">
    <molecule id="Q80TQ2-1"/>
    <property type="protein sequence ID" value="ENSMUSP00000148037.2"/>
    <property type="gene ID" value="ENSMUSG00000036712.17"/>
</dbReference>
<dbReference type="GeneID" id="74256"/>
<dbReference type="KEGG" id="mmu:74256"/>
<dbReference type="UCSC" id="uc009mrt.3">
    <molecule id="Q80TQ2-1"/>
    <property type="organism name" value="mouse"/>
</dbReference>
<dbReference type="UCSC" id="uc033jgq.1">
    <molecule id="Q80TQ2-3"/>
    <property type="organism name" value="mouse"/>
</dbReference>
<dbReference type="UCSC" id="uc033jgr.1">
    <molecule id="Q80TQ2-2"/>
    <property type="organism name" value="mouse"/>
</dbReference>
<dbReference type="AGR" id="MGI:1921506"/>
<dbReference type="CTD" id="1540"/>
<dbReference type="MGI" id="MGI:1921506">
    <property type="gene designation" value="Cyld"/>
</dbReference>
<dbReference type="VEuPathDB" id="HostDB:ENSMUSG00000036712"/>
<dbReference type="eggNOG" id="KOG3556">
    <property type="taxonomic scope" value="Eukaryota"/>
</dbReference>
<dbReference type="GeneTree" id="ENSGT00390000018123"/>
<dbReference type="HOGENOM" id="CLU_003910_0_0_1"/>
<dbReference type="InParanoid" id="Q80TQ2"/>
<dbReference type="OMA" id="SPWYIDE"/>
<dbReference type="OrthoDB" id="8141at9989"/>
<dbReference type="PhylomeDB" id="Q80TQ2"/>
<dbReference type="BRENDA" id="3.4.19.12">
    <property type="organism ID" value="3474"/>
</dbReference>
<dbReference type="Reactome" id="R-MMU-168638">
    <property type="pathway name" value="NOD1/2 Signaling Pathway"/>
</dbReference>
<dbReference type="Reactome" id="R-MMU-5357786">
    <property type="pathway name" value="TNFR1-induced proapoptotic signaling"/>
</dbReference>
<dbReference type="Reactome" id="R-MMU-5357905">
    <property type="pathway name" value="Regulation of TNFR1 signaling"/>
</dbReference>
<dbReference type="Reactome" id="R-MMU-5357956">
    <property type="pathway name" value="TNFR1-induced NF-kappa-B signaling pathway"/>
</dbReference>
<dbReference type="Reactome" id="R-MMU-5689880">
    <property type="pathway name" value="Ub-specific processing proteases"/>
</dbReference>
<dbReference type="Reactome" id="R-MMU-936440">
    <property type="pathway name" value="Negative regulators of DDX58/IFIH1 signaling"/>
</dbReference>
<dbReference type="BioGRID-ORCS" id="74256">
    <property type="hits" value="3 hits in 81 CRISPR screens"/>
</dbReference>
<dbReference type="CD-CODE" id="CE726F99">
    <property type="entry name" value="Postsynaptic density"/>
</dbReference>
<dbReference type="ChiTaRS" id="Cyld">
    <property type="organism name" value="mouse"/>
</dbReference>
<dbReference type="PRO" id="PR:Q80TQ2"/>
<dbReference type="Proteomes" id="UP000000589">
    <property type="component" value="Chromosome 8"/>
</dbReference>
<dbReference type="RNAct" id="Q80TQ2">
    <property type="molecule type" value="protein"/>
</dbReference>
<dbReference type="Bgee" id="ENSMUSG00000036712">
    <property type="expression patterns" value="Expressed in caudate-putamen and 235 other cell types or tissues"/>
</dbReference>
<dbReference type="ExpressionAtlas" id="Q80TQ2">
    <property type="expression patterns" value="baseline and differential"/>
</dbReference>
<dbReference type="GO" id="GO:0034451">
    <property type="term" value="C:centriolar satellite"/>
    <property type="evidence" value="ECO:0007669"/>
    <property type="project" value="Ensembl"/>
</dbReference>
<dbReference type="GO" id="GO:0005813">
    <property type="term" value="C:centrosome"/>
    <property type="evidence" value="ECO:0000250"/>
    <property type="project" value="UniProtKB"/>
</dbReference>
<dbReference type="GO" id="GO:0036064">
    <property type="term" value="C:ciliary basal body"/>
    <property type="evidence" value="ECO:0000314"/>
    <property type="project" value="UniProtKB"/>
</dbReference>
<dbReference type="GO" id="GO:0097542">
    <property type="term" value="C:ciliary tip"/>
    <property type="evidence" value="ECO:0000314"/>
    <property type="project" value="UniProtKB"/>
</dbReference>
<dbReference type="GO" id="GO:0005881">
    <property type="term" value="C:cytoplasmic microtubule"/>
    <property type="evidence" value="ECO:0007669"/>
    <property type="project" value="Ensembl"/>
</dbReference>
<dbReference type="GO" id="GO:0009898">
    <property type="term" value="C:cytoplasmic side of plasma membrane"/>
    <property type="evidence" value="ECO:0007669"/>
    <property type="project" value="Ensembl"/>
</dbReference>
<dbReference type="GO" id="GO:0005829">
    <property type="term" value="C:cytosol"/>
    <property type="evidence" value="ECO:0000250"/>
    <property type="project" value="UniProtKB"/>
</dbReference>
<dbReference type="GO" id="GO:0030496">
    <property type="term" value="C:midbody"/>
    <property type="evidence" value="ECO:0007669"/>
    <property type="project" value="Ensembl"/>
</dbReference>
<dbReference type="GO" id="GO:0005654">
    <property type="term" value="C:nucleoplasm"/>
    <property type="evidence" value="ECO:0007669"/>
    <property type="project" value="Ensembl"/>
</dbReference>
<dbReference type="GO" id="GO:0048471">
    <property type="term" value="C:perinuclear region of cytoplasm"/>
    <property type="evidence" value="ECO:0007669"/>
    <property type="project" value="UniProtKB-SubCell"/>
</dbReference>
<dbReference type="GO" id="GO:0005819">
    <property type="term" value="C:spindle"/>
    <property type="evidence" value="ECO:0000250"/>
    <property type="project" value="UniProtKB"/>
</dbReference>
<dbReference type="GO" id="GO:0004843">
    <property type="term" value="F:cysteine-type deubiquitinase activity"/>
    <property type="evidence" value="ECO:0000314"/>
    <property type="project" value="UniProtKB"/>
</dbReference>
<dbReference type="GO" id="GO:1990380">
    <property type="term" value="F:K48-linked deubiquitinase activity"/>
    <property type="evidence" value="ECO:0000314"/>
    <property type="project" value="MGI"/>
</dbReference>
<dbReference type="GO" id="GO:0061578">
    <property type="term" value="F:K63-linked deubiquitinase activity"/>
    <property type="evidence" value="ECO:0000314"/>
    <property type="project" value="UniProtKB"/>
</dbReference>
<dbReference type="GO" id="GO:0070064">
    <property type="term" value="F:proline-rich region binding"/>
    <property type="evidence" value="ECO:0007669"/>
    <property type="project" value="Ensembl"/>
</dbReference>
<dbReference type="GO" id="GO:0019901">
    <property type="term" value="F:protein kinase binding"/>
    <property type="evidence" value="ECO:0007669"/>
    <property type="project" value="Ensembl"/>
</dbReference>
<dbReference type="GO" id="GO:0008270">
    <property type="term" value="F:zinc ion binding"/>
    <property type="evidence" value="ECO:0000250"/>
    <property type="project" value="UniProtKB"/>
</dbReference>
<dbReference type="GO" id="GO:0043369">
    <property type="term" value="P:CD4-positive or CD8-positive, alpha-beta T cell lineage commitment"/>
    <property type="evidence" value="ECO:0000315"/>
    <property type="project" value="MGI"/>
</dbReference>
<dbReference type="GO" id="GO:0048872">
    <property type="term" value="P:homeostasis of number of cells"/>
    <property type="evidence" value="ECO:0000315"/>
    <property type="project" value="MGI"/>
</dbReference>
<dbReference type="GO" id="GO:0045087">
    <property type="term" value="P:innate immune response"/>
    <property type="evidence" value="ECO:0000250"/>
    <property type="project" value="UniProtKB"/>
</dbReference>
<dbReference type="GO" id="GO:0070266">
    <property type="term" value="P:necroptotic process"/>
    <property type="evidence" value="ECO:0000315"/>
    <property type="project" value="MGI"/>
</dbReference>
<dbReference type="GO" id="GO:0043124">
    <property type="term" value="P:negative regulation of canonical NF-kappaB signal transduction"/>
    <property type="evidence" value="ECO:0000250"/>
    <property type="project" value="UniProtKB"/>
</dbReference>
<dbReference type="GO" id="GO:0090090">
    <property type="term" value="P:negative regulation of canonical Wnt signaling pathway"/>
    <property type="evidence" value="ECO:0000250"/>
    <property type="project" value="UniProtKB"/>
</dbReference>
<dbReference type="GO" id="GO:0050728">
    <property type="term" value="P:negative regulation of inflammatory response"/>
    <property type="evidence" value="ECO:0000315"/>
    <property type="project" value="UniProtKB"/>
</dbReference>
<dbReference type="GO" id="GO:2000493">
    <property type="term" value="P:negative regulation of interleukin-18-mediated signaling pathway"/>
    <property type="evidence" value="ECO:0000315"/>
    <property type="project" value="UniProtKB"/>
</dbReference>
<dbReference type="GO" id="GO:0046329">
    <property type="term" value="P:negative regulation of JNK cascade"/>
    <property type="evidence" value="ECO:0000314"/>
    <property type="project" value="UniProtKB"/>
</dbReference>
<dbReference type="GO" id="GO:0032088">
    <property type="term" value="P:negative regulation of NF-kappaB transcription factor activity"/>
    <property type="evidence" value="ECO:0000250"/>
    <property type="project" value="UniProtKB"/>
</dbReference>
<dbReference type="GO" id="GO:1901223">
    <property type="term" value="P:negative regulation of non-canonical NF-kappaB signal transduction"/>
    <property type="evidence" value="ECO:0000250"/>
    <property type="project" value="UniProtKB"/>
</dbReference>
<dbReference type="GO" id="GO:1903753">
    <property type="term" value="P:negative regulation of p38MAPK cascade"/>
    <property type="evidence" value="ECO:0000314"/>
    <property type="project" value="UniProtKB"/>
</dbReference>
<dbReference type="GO" id="GO:2001238">
    <property type="term" value="P:positive regulation of extrinsic apoptotic signaling pathway"/>
    <property type="evidence" value="ECO:0007669"/>
    <property type="project" value="Ensembl"/>
</dbReference>
<dbReference type="GO" id="GO:1903829">
    <property type="term" value="P:positive regulation of protein localization"/>
    <property type="evidence" value="ECO:0000314"/>
    <property type="project" value="MGI"/>
</dbReference>
<dbReference type="GO" id="GO:0045582">
    <property type="term" value="P:positive regulation of T cell differentiation"/>
    <property type="evidence" value="ECO:0000315"/>
    <property type="project" value="MGI"/>
</dbReference>
<dbReference type="GO" id="GO:0050862">
    <property type="term" value="P:positive regulation of T cell receptor signaling pathway"/>
    <property type="evidence" value="ECO:0000315"/>
    <property type="project" value="MGI"/>
</dbReference>
<dbReference type="GO" id="GO:0016579">
    <property type="term" value="P:protein deubiquitination"/>
    <property type="evidence" value="ECO:0000314"/>
    <property type="project" value="UniProtKB"/>
</dbReference>
<dbReference type="GO" id="GO:0070536">
    <property type="term" value="P:protein K63-linked deubiquitination"/>
    <property type="evidence" value="ECO:0000314"/>
    <property type="project" value="UniProtKB"/>
</dbReference>
<dbReference type="GO" id="GO:1990108">
    <property type="term" value="P:protein linear deubiquitination"/>
    <property type="evidence" value="ECO:0000314"/>
    <property type="project" value="UniProtKB"/>
</dbReference>
<dbReference type="GO" id="GO:0006508">
    <property type="term" value="P:proteolysis"/>
    <property type="evidence" value="ECO:0007669"/>
    <property type="project" value="UniProtKB-KW"/>
</dbReference>
<dbReference type="GO" id="GO:0045577">
    <property type="term" value="P:regulation of B cell differentiation"/>
    <property type="evidence" value="ECO:0000315"/>
    <property type="project" value="MGI"/>
</dbReference>
<dbReference type="GO" id="GO:1902017">
    <property type="term" value="P:regulation of cilium assembly"/>
    <property type="evidence" value="ECO:0000315"/>
    <property type="project" value="UniProtKB"/>
</dbReference>
<dbReference type="GO" id="GO:0050727">
    <property type="term" value="P:regulation of inflammatory response"/>
    <property type="evidence" value="ECO:0000250"/>
    <property type="project" value="UniProtKB"/>
</dbReference>
<dbReference type="GO" id="GO:2001242">
    <property type="term" value="P:regulation of intrinsic apoptotic signaling pathway"/>
    <property type="evidence" value="ECO:0007669"/>
    <property type="project" value="Ensembl"/>
</dbReference>
<dbReference type="GO" id="GO:0070507">
    <property type="term" value="P:regulation of microtubule cytoskeleton organization"/>
    <property type="evidence" value="ECO:0007669"/>
    <property type="project" value="Ensembl"/>
</dbReference>
<dbReference type="GO" id="GO:0007346">
    <property type="term" value="P:regulation of mitotic cell cycle"/>
    <property type="evidence" value="ECO:0007669"/>
    <property type="project" value="Ensembl"/>
</dbReference>
<dbReference type="GO" id="GO:0060544">
    <property type="term" value="P:regulation of necroptotic process"/>
    <property type="evidence" value="ECO:0000314"/>
    <property type="project" value="UniProtKB"/>
</dbReference>
<dbReference type="GO" id="GO:0050856">
    <property type="term" value="P:regulation of T cell receptor signaling pathway"/>
    <property type="evidence" value="ECO:0000266"/>
    <property type="project" value="MGI"/>
</dbReference>
<dbReference type="GO" id="GO:0010803">
    <property type="term" value="P:regulation of tumor necrosis factor-mediated signaling pathway"/>
    <property type="evidence" value="ECO:0000314"/>
    <property type="project" value="UniProtKB"/>
</dbReference>
<dbReference type="GO" id="GO:1901026">
    <property type="term" value="P:ripoptosome assembly involved in necroptotic process"/>
    <property type="evidence" value="ECO:0000315"/>
    <property type="project" value="MGI"/>
</dbReference>
<dbReference type="GO" id="GO:0016055">
    <property type="term" value="P:Wnt signaling pathway"/>
    <property type="evidence" value="ECO:0007669"/>
    <property type="project" value="UniProtKB-KW"/>
</dbReference>
<dbReference type="CDD" id="cd02670">
    <property type="entry name" value="Peptidase_C19N"/>
    <property type="match status" value="1"/>
</dbReference>
<dbReference type="FunFam" id="2.30.30.190:FF:000004">
    <property type="entry name" value="Putative ubiquitin carboxyl-terminal hydrolase CYLD"/>
    <property type="match status" value="1"/>
</dbReference>
<dbReference type="FunFam" id="2.30.30.190:FF:000006">
    <property type="entry name" value="Putative ubiquitin carboxyl-terminal hydrolase CYLD"/>
    <property type="match status" value="1"/>
</dbReference>
<dbReference type="FunFam" id="2.30.30.190:FF:000007">
    <property type="entry name" value="Putative ubiquitin carboxyl-terminal hydrolase CYLD"/>
    <property type="match status" value="1"/>
</dbReference>
<dbReference type="FunFam" id="3.90.70.10:FF:000009">
    <property type="entry name" value="Putative ubiquitin carboxyl-terminal hydrolase CYLD"/>
    <property type="match status" value="1"/>
</dbReference>
<dbReference type="Gene3D" id="2.30.30.190">
    <property type="entry name" value="CAP Gly-rich-like domain"/>
    <property type="match status" value="3"/>
</dbReference>
<dbReference type="Gene3D" id="3.90.70.10">
    <property type="entry name" value="Cysteine proteinases"/>
    <property type="match status" value="1"/>
</dbReference>
<dbReference type="InterPro" id="IPR036859">
    <property type="entry name" value="CAP-Gly_dom_sf"/>
</dbReference>
<dbReference type="InterPro" id="IPR000938">
    <property type="entry name" value="CAP-Gly_domain"/>
</dbReference>
<dbReference type="InterPro" id="IPR038765">
    <property type="entry name" value="Papain-like_cys_pep_sf"/>
</dbReference>
<dbReference type="InterPro" id="IPR001394">
    <property type="entry name" value="Peptidase_C19_UCH"/>
</dbReference>
<dbReference type="InterPro" id="IPR018200">
    <property type="entry name" value="USP_CS"/>
</dbReference>
<dbReference type="InterPro" id="IPR028889">
    <property type="entry name" value="USP_dom"/>
</dbReference>
<dbReference type="PANTHER" id="PTHR11830">
    <property type="entry name" value="40S RIBOSOMAL PROTEIN S3A"/>
    <property type="match status" value="1"/>
</dbReference>
<dbReference type="Pfam" id="PF01302">
    <property type="entry name" value="CAP_GLY"/>
    <property type="match status" value="2"/>
</dbReference>
<dbReference type="Pfam" id="PF16607">
    <property type="entry name" value="CYLD_phos_site"/>
    <property type="match status" value="1"/>
</dbReference>
<dbReference type="Pfam" id="PF00443">
    <property type="entry name" value="UCH"/>
    <property type="match status" value="1"/>
</dbReference>
<dbReference type="SMART" id="SM01052">
    <property type="entry name" value="CAP_GLY"/>
    <property type="match status" value="3"/>
</dbReference>
<dbReference type="SUPFAM" id="SSF74924">
    <property type="entry name" value="Cap-Gly domain"/>
    <property type="match status" value="3"/>
</dbReference>
<dbReference type="SUPFAM" id="SSF54001">
    <property type="entry name" value="Cysteine proteinases"/>
    <property type="match status" value="1"/>
</dbReference>
<dbReference type="PROSITE" id="PS00845">
    <property type="entry name" value="CAP_GLY_1"/>
    <property type="match status" value="1"/>
</dbReference>
<dbReference type="PROSITE" id="PS50245">
    <property type="entry name" value="CAP_GLY_2"/>
    <property type="match status" value="2"/>
</dbReference>
<dbReference type="PROSITE" id="PS00972">
    <property type="entry name" value="USP_1"/>
    <property type="match status" value="1"/>
</dbReference>
<dbReference type="PROSITE" id="PS50235">
    <property type="entry name" value="USP_3"/>
    <property type="match status" value="1"/>
</dbReference>
<keyword id="KW-0025">Alternative splicing</keyword>
<keyword id="KW-1003">Cell membrane</keyword>
<keyword id="KW-0966">Cell projection</keyword>
<keyword id="KW-0963">Cytoplasm</keyword>
<keyword id="KW-0206">Cytoskeleton</keyword>
<keyword id="KW-0378">Hydrolase</keyword>
<keyword id="KW-0391">Immunity</keyword>
<keyword id="KW-0399">Innate immunity</keyword>
<keyword id="KW-0472">Membrane</keyword>
<keyword id="KW-0479">Metal-binding</keyword>
<keyword id="KW-0493">Microtubule</keyword>
<keyword id="KW-0597">Phosphoprotein</keyword>
<keyword id="KW-0645">Protease</keyword>
<keyword id="KW-1185">Reference proteome</keyword>
<keyword id="KW-0677">Repeat</keyword>
<keyword id="KW-0788">Thiol protease</keyword>
<keyword id="KW-0832">Ubl conjugation</keyword>
<keyword id="KW-0833">Ubl conjugation pathway</keyword>
<keyword id="KW-0879">Wnt signaling pathway</keyword>
<keyword id="KW-0862">Zinc</keyword>
<accession>Q80TQ2</accession>
<accession>Q80VB3</accession>
<accession>Q8BXZ3</accession>
<accession>Q8BYL9</accession>
<accession>Q8CGB0</accession>
<proteinExistence type="evidence at protein level"/>
<feature type="chain" id="PRO_0000080699" description="Ubiquitin carboxyl-terminal hydrolase CYLD">
    <location>
        <begin position="1"/>
        <end position="952"/>
    </location>
</feature>
<feature type="domain" description="CAP-Gly 1" evidence="2">
    <location>
        <begin position="153"/>
        <end position="198"/>
    </location>
</feature>
<feature type="domain" description="CAP-Gly 2" evidence="2">
    <location>
        <begin position="253"/>
        <end position="286"/>
    </location>
</feature>
<feature type="domain" description="CAP-Gly 3" evidence="2">
    <location>
        <begin position="488"/>
        <end position="531"/>
    </location>
</feature>
<feature type="domain" description="USP">
    <location>
        <begin position="588"/>
        <end position="946"/>
    </location>
</feature>
<feature type="region of interest" description="Interaction with TRIP" evidence="1">
    <location>
        <begin position="106"/>
        <end position="589"/>
    </location>
</feature>
<feature type="region of interest" description="Disordered" evidence="4">
    <location>
        <begin position="311"/>
        <end position="350"/>
    </location>
</feature>
<feature type="region of interest" description="Disordered" evidence="4">
    <location>
        <begin position="386"/>
        <end position="409"/>
    </location>
</feature>
<feature type="region of interest" description="Interaction with TRAF2" evidence="1">
    <location>
        <begin position="390"/>
        <end position="465"/>
    </location>
</feature>
<feature type="region of interest" description="Interaction with IKBKG/NEMO" evidence="1">
    <location>
        <begin position="466"/>
        <end position="680"/>
    </location>
</feature>
<feature type="region of interest" description="B-box" evidence="1">
    <location>
        <begin position="777"/>
        <end position="829"/>
    </location>
</feature>
<feature type="compositionally biased region" description="Polar residues" evidence="4">
    <location>
        <begin position="327"/>
        <end position="346"/>
    </location>
</feature>
<feature type="active site" description="Nucleophile" evidence="3 19">
    <location>
        <position position="597"/>
    </location>
</feature>
<feature type="active site" description="Proton acceptor" evidence="3">
    <location>
        <position position="867"/>
    </location>
</feature>
<feature type="binding site" evidence="1">
    <location>
        <position position="784"/>
    </location>
    <ligand>
        <name>Zn(2+)</name>
        <dbReference type="ChEBI" id="CHEBI:29105"/>
        <label>1</label>
    </ligand>
</feature>
<feature type="binding site" evidence="1">
    <location>
        <position position="787"/>
    </location>
    <ligand>
        <name>Zn(2+)</name>
        <dbReference type="ChEBI" id="CHEBI:29105"/>
        <label>1</label>
    </ligand>
</feature>
<feature type="binding site" evidence="1">
    <location>
        <position position="795"/>
    </location>
    <ligand>
        <name>Zn(2+)</name>
        <dbReference type="ChEBI" id="CHEBI:29105"/>
        <label>2</label>
    </ligand>
</feature>
<feature type="binding site" evidence="1">
    <location>
        <position position="798"/>
    </location>
    <ligand>
        <name>Zn(2+)</name>
        <dbReference type="ChEBI" id="CHEBI:29105"/>
        <label>2</label>
    </ligand>
</feature>
<feature type="binding site" evidence="1">
    <location>
        <position position="813"/>
    </location>
    <ligand>
        <name>Zn(2+)</name>
        <dbReference type="ChEBI" id="CHEBI:29105"/>
        <label>1</label>
    </ligand>
</feature>
<feature type="binding site" evidence="1">
    <location>
        <position position="816"/>
    </location>
    <ligand>
        <name>Zn(2+)</name>
        <dbReference type="ChEBI" id="CHEBI:29105"/>
        <label>1</label>
    </ligand>
</feature>
<feature type="binding site" evidence="1">
    <location>
        <position position="821"/>
    </location>
    <ligand>
        <name>Zn(2+)</name>
        <dbReference type="ChEBI" id="CHEBI:29105"/>
        <label>2</label>
    </ligand>
</feature>
<feature type="binding site" evidence="1">
    <location>
        <position position="829"/>
    </location>
    <ligand>
        <name>Zn(2+)</name>
        <dbReference type="ChEBI" id="CHEBI:29105"/>
        <label>2</label>
    </ligand>
</feature>
<feature type="modified residue" description="Phosphoserine" evidence="1">
    <location>
        <position position="383"/>
    </location>
</feature>
<feature type="modified residue" description="Phosphoserine" evidence="20">
    <location>
        <position position="414"/>
    </location>
</feature>
<feature type="modified residue" description="Phosphoserine" evidence="1">
    <location>
        <position position="418"/>
    </location>
</feature>
<feature type="splice variant" id="VSP_011278" description="In isoform 1." evidence="17">
    <original>P</original>
    <variation>PALS</variation>
    <location>
        <position position="304"/>
    </location>
</feature>
<feature type="splice variant" id="VSP_011279" description="In isoform 3." evidence="17">
    <original>DSVTQERRPPKLAF</original>
    <variation>GTSKNILDQQLKGK</variation>
    <location>
        <begin position="305"/>
        <end position="318"/>
    </location>
</feature>
<feature type="splice variant" id="VSP_011280" description="In isoform 3." evidence="17">
    <location>
        <begin position="319"/>
        <end position="952"/>
    </location>
</feature>
<feature type="mutagenesis site" description="Loss of deubiquitinating activity." evidence="16">
    <original>C</original>
    <variation>A</variation>
    <location>
        <position position="597"/>
    </location>
</feature>
<feature type="mutagenesis site" description="Decreased inhibition of NF-kappa-B." evidence="15">
    <original>D</original>
    <variation>G</variation>
    <location>
        <position position="677"/>
    </location>
</feature>
<feature type="mutagenesis site" description="Increased inhibition of NF-kappa-B." evidence="15">
    <original>M</original>
    <variation>V</variation>
    <location>
        <position position="715"/>
    </location>
</feature>
<feature type="sequence conflict" description="In Ref. 2; BAC30222." evidence="18" ref="2">
    <original>M</original>
    <variation>V</variation>
    <location>
        <position position="403"/>
    </location>
</feature>
<protein>
    <recommendedName>
        <fullName>Ubiquitin carboxyl-terminal hydrolase CYLD</fullName>
        <ecNumber evidence="16">3.4.19.12</ecNumber>
    </recommendedName>
    <alternativeName>
        <fullName>Deubiquitinating enzyme CYLD</fullName>
    </alternativeName>
    <alternativeName>
        <fullName>Ubiquitin thioesterase CYLD</fullName>
    </alternativeName>
    <alternativeName>
        <fullName>Ubiquitin-specific-processing protease CYLD</fullName>
    </alternativeName>
</protein>
<reference key="1">
    <citation type="journal article" date="2003" name="DNA Res.">
        <title>Prediction of the coding sequences of mouse homologues of KIAA gene: II. The complete nucleotide sequences of 400 mouse KIAA-homologous cDNAs identified by screening of terminal sequences of cDNA clones randomly sampled from size-fractionated libraries.</title>
        <authorList>
            <person name="Okazaki N."/>
            <person name="Kikuno R."/>
            <person name="Ohara R."/>
            <person name="Inamoto S."/>
            <person name="Aizawa H."/>
            <person name="Yuasa S."/>
            <person name="Nakajima D."/>
            <person name="Nagase T."/>
            <person name="Ohara O."/>
            <person name="Koga H."/>
        </authorList>
    </citation>
    <scope>NUCLEOTIDE SEQUENCE [LARGE SCALE MRNA] (ISOFORM 2)</scope>
    <source>
        <tissue>Brain</tissue>
    </source>
</reference>
<reference key="2">
    <citation type="journal article" date="2005" name="Science">
        <title>The transcriptional landscape of the mammalian genome.</title>
        <authorList>
            <person name="Carninci P."/>
            <person name="Kasukawa T."/>
            <person name="Katayama S."/>
            <person name="Gough J."/>
            <person name="Frith M.C."/>
            <person name="Maeda N."/>
            <person name="Oyama R."/>
            <person name="Ravasi T."/>
            <person name="Lenhard B."/>
            <person name="Wells C."/>
            <person name="Kodzius R."/>
            <person name="Shimokawa K."/>
            <person name="Bajic V.B."/>
            <person name="Brenner S.E."/>
            <person name="Batalov S."/>
            <person name="Forrest A.R."/>
            <person name="Zavolan M."/>
            <person name="Davis M.J."/>
            <person name="Wilming L.G."/>
            <person name="Aidinis V."/>
            <person name="Allen J.E."/>
            <person name="Ambesi-Impiombato A."/>
            <person name="Apweiler R."/>
            <person name="Aturaliya R.N."/>
            <person name="Bailey T.L."/>
            <person name="Bansal M."/>
            <person name="Baxter L."/>
            <person name="Beisel K.W."/>
            <person name="Bersano T."/>
            <person name="Bono H."/>
            <person name="Chalk A.M."/>
            <person name="Chiu K.P."/>
            <person name="Choudhary V."/>
            <person name="Christoffels A."/>
            <person name="Clutterbuck D.R."/>
            <person name="Crowe M.L."/>
            <person name="Dalla E."/>
            <person name="Dalrymple B.P."/>
            <person name="de Bono B."/>
            <person name="Della Gatta G."/>
            <person name="di Bernardo D."/>
            <person name="Down T."/>
            <person name="Engstrom P."/>
            <person name="Fagiolini M."/>
            <person name="Faulkner G."/>
            <person name="Fletcher C.F."/>
            <person name="Fukushima T."/>
            <person name="Furuno M."/>
            <person name="Futaki S."/>
            <person name="Gariboldi M."/>
            <person name="Georgii-Hemming P."/>
            <person name="Gingeras T.R."/>
            <person name="Gojobori T."/>
            <person name="Green R.E."/>
            <person name="Gustincich S."/>
            <person name="Harbers M."/>
            <person name="Hayashi Y."/>
            <person name="Hensch T.K."/>
            <person name="Hirokawa N."/>
            <person name="Hill D."/>
            <person name="Huminiecki L."/>
            <person name="Iacono M."/>
            <person name="Ikeo K."/>
            <person name="Iwama A."/>
            <person name="Ishikawa T."/>
            <person name="Jakt M."/>
            <person name="Kanapin A."/>
            <person name="Katoh M."/>
            <person name="Kawasawa Y."/>
            <person name="Kelso J."/>
            <person name="Kitamura H."/>
            <person name="Kitano H."/>
            <person name="Kollias G."/>
            <person name="Krishnan S.P."/>
            <person name="Kruger A."/>
            <person name="Kummerfeld S.K."/>
            <person name="Kurochkin I.V."/>
            <person name="Lareau L.F."/>
            <person name="Lazarevic D."/>
            <person name="Lipovich L."/>
            <person name="Liu J."/>
            <person name="Liuni S."/>
            <person name="McWilliam S."/>
            <person name="Madan Babu M."/>
            <person name="Madera M."/>
            <person name="Marchionni L."/>
            <person name="Matsuda H."/>
            <person name="Matsuzawa S."/>
            <person name="Miki H."/>
            <person name="Mignone F."/>
            <person name="Miyake S."/>
            <person name="Morris K."/>
            <person name="Mottagui-Tabar S."/>
            <person name="Mulder N."/>
            <person name="Nakano N."/>
            <person name="Nakauchi H."/>
            <person name="Ng P."/>
            <person name="Nilsson R."/>
            <person name="Nishiguchi S."/>
            <person name="Nishikawa S."/>
            <person name="Nori F."/>
            <person name="Ohara O."/>
            <person name="Okazaki Y."/>
            <person name="Orlando V."/>
            <person name="Pang K.C."/>
            <person name="Pavan W.J."/>
            <person name="Pavesi G."/>
            <person name="Pesole G."/>
            <person name="Petrovsky N."/>
            <person name="Piazza S."/>
            <person name="Reed J."/>
            <person name="Reid J.F."/>
            <person name="Ring B.Z."/>
            <person name="Ringwald M."/>
            <person name="Rost B."/>
            <person name="Ruan Y."/>
            <person name="Salzberg S.L."/>
            <person name="Sandelin A."/>
            <person name="Schneider C."/>
            <person name="Schoenbach C."/>
            <person name="Sekiguchi K."/>
            <person name="Semple C.A."/>
            <person name="Seno S."/>
            <person name="Sessa L."/>
            <person name="Sheng Y."/>
            <person name="Shibata Y."/>
            <person name="Shimada H."/>
            <person name="Shimada K."/>
            <person name="Silva D."/>
            <person name="Sinclair B."/>
            <person name="Sperling S."/>
            <person name="Stupka E."/>
            <person name="Sugiura K."/>
            <person name="Sultana R."/>
            <person name="Takenaka Y."/>
            <person name="Taki K."/>
            <person name="Tammoja K."/>
            <person name="Tan S.L."/>
            <person name="Tang S."/>
            <person name="Taylor M.S."/>
            <person name="Tegner J."/>
            <person name="Teichmann S.A."/>
            <person name="Ueda H.R."/>
            <person name="van Nimwegen E."/>
            <person name="Verardo R."/>
            <person name="Wei C.L."/>
            <person name="Yagi K."/>
            <person name="Yamanishi H."/>
            <person name="Zabarovsky E."/>
            <person name="Zhu S."/>
            <person name="Zimmer A."/>
            <person name="Hide W."/>
            <person name="Bult C."/>
            <person name="Grimmond S.M."/>
            <person name="Teasdale R.D."/>
            <person name="Liu E.T."/>
            <person name="Brusic V."/>
            <person name="Quackenbush J."/>
            <person name="Wahlestedt C."/>
            <person name="Mattick J.S."/>
            <person name="Hume D.A."/>
            <person name="Kai C."/>
            <person name="Sasaki D."/>
            <person name="Tomaru Y."/>
            <person name="Fukuda S."/>
            <person name="Kanamori-Katayama M."/>
            <person name="Suzuki M."/>
            <person name="Aoki J."/>
            <person name="Arakawa T."/>
            <person name="Iida J."/>
            <person name="Imamura K."/>
            <person name="Itoh M."/>
            <person name="Kato T."/>
            <person name="Kawaji H."/>
            <person name="Kawagashira N."/>
            <person name="Kawashima T."/>
            <person name="Kojima M."/>
            <person name="Kondo S."/>
            <person name="Konno H."/>
            <person name="Nakano K."/>
            <person name="Ninomiya N."/>
            <person name="Nishio T."/>
            <person name="Okada M."/>
            <person name="Plessy C."/>
            <person name="Shibata K."/>
            <person name="Shiraki T."/>
            <person name="Suzuki S."/>
            <person name="Tagami M."/>
            <person name="Waki K."/>
            <person name="Watahiki A."/>
            <person name="Okamura-Oho Y."/>
            <person name="Suzuki H."/>
            <person name="Kawai J."/>
            <person name="Hayashizaki Y."/>
        </authorList>
    </citation>
    <scope>NUCLEOTIDE SEQUENCE [LARGE SCALE MRNA] (ISOFORM 3)</scope>
    <scope>NUCLEOTIDE SEQUENCE [LARGE SCALE MRNA] OF 1-620 (ISOFORM 1)</scope>
    <source>
        <strain>C57BL/6J</strain>
        <tissue>Cerebellum</tissue>
        <tissue>Hypothalamus</tissue>
    </source>
</reference>
<reference key="3">
    <citation type="journal article" date="2004" name="Genome Res.">
        <title>The status, quality, and expansion of the NIH full-length cDNA project: the Mammalian Gene Collection (MGC).</title>
        <authorList>
            <consortium name="The MGC Project Team"/>
        </authorList>
    </citation>
    <scope>NUCLEOTIDE SEQUENCE [LARGE SCALE MRNA] (ISOFORM 2)</scope>
    <source>
        <strain>FVB/N</strain>
        <tissue>Mammary gland</tissue>
    </source>
</reference>
<reference key="4">
    <citation type="journal article" date="2006" name="Cell">
        <title>Cyld inhibits tumor cell proliferation by blocking Bcl-3-dependent NF-kappaB signaling.</title>
        <authorList>
            <person name="Massoumi R."/>
            <person name="Chmielarska K."/>
            <person name="Hennecke K."/>
            <person name="Pfeifer A."/>
            <person name="Fassler R."/>
        </authorList>
    </citation>
    <scope>FUNCTION</scope>
    <scope>DISRUPTION PHENOTYPE</scope>
    <scope>INTERACTION WITH BCL3</scope>
    <scope>SUBCELLULAR LOCATION</scope>
</reference>
<reference key="5">
    <citation type="journal article" date="2006" name="Nat. Immunol.">
        <title>Regulation of T cell development by the deubiquitinating enzyme CYLD.</title>
        <authorList>
            <person name="Reiley W.W."/>
            <person name="Zhang M."/>
            <person name="Jin W."/>
            <person name="Losiewicz M."/>
            <person name="Donohue K.B."/>
            <person name="Norbury C.C."/>
            <person name="Sun S.C."/>
        </authorList>
    </citation>
    <scope>FUNCTION</scope>
    <scope>DISRUPTION PHENOTYPE</scope>
</reference>
<reference key="6">
    <citation type="journal article" date="2007" name="J. Exp. Med.">
        <title>Deubiquitinating enzyme CYLD negatively regulates the ubiquitin-dependent kinase Tak1 and prevents abnormal T cell responses.</title>
        <authorList>
            <person name="Reiley W.W."/>
            <person name="Jin W."/>
            <person name="Lee A.J."/>
            <person name="Wright A."/>
            <person name="Wu X."/>
            <person name="Tewalt E.F."/>
            <person name="Leonard T.O."/>
            <person name="Norbury C.C."/>
            <person name="Fitzpatrick L."/>
            <person name="Zhang M."/>
            <person name="Sun S.C."/>
        </authorList>
    </citation>
    <scope>FUNCTION</scope>
    <scope>INTERACTION WITH MAP3K7</scope>
    <scope>DISRUPTION PHENOTYPE</scope>
</reference>
<reference key="7">
    <citation type="journal article" date="2008" name="Cell. Microbiol.">
        <title>CYLD is a crucial negative regulator of innate immune response in Escherichia coli pneumonia.</title>
        <authorList>
            <person name="Lim J.H."/>
            <person name="Ha U.H."/>
            <person name="Woo C.H."/>
            <person name="Xu H."/>
            <person name="Li J.D."/>
        </authorList>
    </citation>
    <scope>FUNCTION</scope>
    <scope>DISRUPTION PHENOTYPE</scope>
</reference>
<reference key="8">
    <citation type="journal article" date="2008" name="J. Clin. Invest.">
        <title>Deubiquitinating enzyme CYLD negatively regulates RANK signaling and osteoclastogenesis in mice.</title>
        <authorList>
            <person name="Jin W."/>
            <person name="Chang M."/>
            <person name="Paul E.M."/>
            <person name="Babu G."/>
            <person name="Lee A.J."/>
            <person name="Reiley W."/>
            <person name="Wright A."/>
            <person name="Zhang M."/>
            <person name="You J."/>
            <person name="Sun S.C."/>
        </authorList>
    </citation>
    <scope>DISRUPTION PHENOTYPE</scope>
    <scope>FUNCTION</scope>
    <scope>INTERACTION WITH SQSTM1</scope>
    <scope>IDENTIFICATION IN A COMPLEX WITH TRAF6 AND SQSTM1</scope>
    <scope>INDUCTION</scope>
</reference>
<reference key="9">
    <citation type="journal article" date="2010" name="Blood">
        <title>CYLD regulates angiogenesis by mediating vascular endothelial cell migration.</title>
        <authorList>
            <person name="Gao J."/>
            <person name="Sun L."/>
            <person name="Huo L."/>
            <person name="Liu M."/>
            <person name="Li D."/>
            <person name="Zhou J."/>
        </authorList>
    </citation>
    <scope>FUNCTION</scope>
</reference>
<reference key="10">
    <citation type="journal article" date="2010" name="Cell">
        <title>A tissue-specific atlas of mouse protein phosphorylation and expression.</title>
        <authorList>
            <person name="Huttlin E.L."/>
            <person name="Jedrychowski M.P."/>
            <person name="Elias J.E."/>
            <person name="Goswami T."/>
            <person name="Rad R."/>
            <person name="Beausoleil S.A."/>
            <person name="Villen J."/>
            <person name="Haas W."/>
            <person name="Sowa M.E."/>
            <person name="Gygi S.P."/>
        </authorList>
    </citation>
    <scope>PHOSPHORYLATION [LARGE SCALE ANALYSIS] AT SER-414</scope>
    <scope>IDENTIFICATION BY MASS SPECTROMETRY [LARGE SCALE ANALYSIS]</scope>
    <source>
        <tissue>Brain</tissue>
        <tissue>Kidney</tissue>
    </source>
</reference>
<reference key="11">
    <citation type="journal article" date="2010" name="EMBO J.">
        <title>CYLD negatively regulates cell-cycle progression by inactivating HDAC6 and increasing the levels of acetylated tubulin.</title>
        <authorList>
            <person name="Wickstrom S.A."/>
            <person name="Masoumi K.C."/>
            <person name="Khochbin S."/>
            <person name="Fassler R."/>
            <person name="Massoumi R."/>
        </authorList>
    </citation>
    <scope>FUNCTION</scope>
    <scope>INTERACTION WITH HDAC6</scope>
    <scope>BCL3 AND MICROTUBULES</scope>
    <scope>SUBCELLULAR LOCATION</scope>
</reference>
<reference key="12">
    <citation type="journal article" date="2014" name="Nat. Commun.">
        <title>The deubiquitinating enzyme CYLD controls apical docking of basal bodies in ciliated epithelial cells.</title>
        <authorList>
            <person name="Eguether T."/>
            <person name="Ermolaeva M.A."/>
            <person name="Zhao Y."/>
            <person name="Bonnet M.C."/>
            <person name="Jain A."/>
            <person name="Pasparakis M."/>
            <person name="Courtois G."/>
            <person name="Tassin A.M."/>
        </authorList>
    </citation>
    <scope>FUNCTION</scope>
    <scope>SUBCELLULAR LOCATION</scope>
</reference>
<reference key="13">
    <citation type="journal article" date="2017" name="Genes Dev.">
        <title>SPATA2 regulates the activation of RIPK1 by modulating linear ubiquitination.</title>
        <authorList>
            <person name="Wei R."/>
            <person name="Xu L.W."/>
            <person name="Liu J."/>
            <person name="Li Y."/>
            <person name="Zhang P."/>
            <person name="Shan B."/>
            <person name="Lu X."/>
            <person name="Qian L."/>
            <person name="Wu Z."/>
            <person name="Dong K."/>
            <person name="Zhu H."/>
            <person name="Pan L."/>
            <person name="Yuan J."/>
            <person name="Pan H."/>
        </authorList>
    </citation>
    <scope>FUNCTION</scope>
</reference>
<reference key="14">
    <citation type="journal article" date="2018" name="Nat. Med.">
        <title>The deubiquitinating enzyme cylindromatosis mitigates nonalcoholic steatohepatitis.</title>
        <authorList>
            <person name="Ji Y.X."/>
            <person name="Huang Z."/>
            <person name="Yang X."/>
            <person name="Wang X."/>
            <person name="Zhao L.P."/>
            <person name="Wang P.X."/>
            <person name="Zhang X.J."/>
            <person name="Alves-Bezerra M."/>
            <person name="Cai L."/>
            <person name="Zhang P."/>
            <person name="Lu Y.X."/>
            <person name="Bai L."/>
            <person name="Gao M.M."/>
            <person name="Zhao H."/>
            <person name="Tian S."/>
            <person name="Wang Y."/>
            <person name="Huang Z.X."/>
            <person name="Zhu X.Y."/>
            <person name="Zhang Y."/>
            <person name="Gong J."/>
            <person name="She Z.G."/>
            <person name="Li F."/>
            <person name="Cohen D.E."/>
            <person name="Li H."/>
        </authorList>
    </citation>
    <scope>FUNCTION</scope>
    <scope>UBIQUITINATION</scope>
    <scope>DISRUPTION PHENOTYPE</scope>
</reference>
<reference key="15">
    <citation type="journal article" date="2020" name="Brain">
        <title>CYLD is a causative gene for frontotemporal dementia - amyotrophic lateral sclerosis.</title>
        <authorList>
            <person name="Dobson-Stone C."/>
            <person name="Hallupp M."/>
            <person name="Shahheydari H."/>
            <person name="Ragagnin A.M.G."/>
            <person name="Chatterton Z."/>
            <person name="Carew-Jones F."/>
            <person name="Shepherd C.E."/>
            <person name="Stefen H."/>
            <person name="Paric E."/>
            <person name="Fath T."/>
            <person name="Thompson E.M."/>
            <person name="Blumbergs P."/>
            <person name="Short C.L."/>
            <person name="Field C.D."/>
            <person name="Panegyres P.K."/>
            <person name="Hecker J."/>
            <person name="Nicholson G."/>
            <person name="Shaw A.D."/>
            <person name="Fullerton J.M."/>
            <person name="Luty A.A."/>
            <person name="Schofield P.R."/>
            <person name="Brooks W.S."/>
            <person name="Rajan N."/>
            <person name="Bennett M.F."/>
            <person name="Bahlo M."/>
            <person name="Landers J.E."/>
            <person name="Piguet O."/>
            <person name="Hodges J.R."/>
            <person name="Halliday G.M."/>
            <person name="Topp S.D."/>
            <person name="Smith B.N."/>
            <person name="Shaw C.E."/>
            <person name="McCann E."/>
            <person name="Fifita J.A."/>
            <person name="Williams K.L."/>
            <person name="Atkin J.D."/>
            <person name="Blair I.P."/>
            <person name="Kwok J.B."/>
        </authorList>
    </citation>
    <scope>FUNCTION</scope>
    <scope>MUTAGENESIS OF ASP-677 AND MET-715</scope>
</reference>
<reference key="16">
    <citation type="journal article" date="2020" name="Nat. Immunol.">
        <title>Deubiquitination of NLRP6 inflammasome by Cyld critically regulates intestinal inflammation.</title>
        <authorList>
            <person name="Mukherjee S."/>
            <person name="Kumar R."/>
            <person name="Tsakem Lenou E."/>
            <person name="Basrur V."/>
            <person name="Kontoyiannis D.L."/>
            <person name="Ioakeimidis F."/>
            <person name="Mosialos G."/>
            <person name="Theiss A.L."/>
            <person name="Flavell R.A."/>
            <person name="Venuprasad K."/>
        </authorList>
    </citation>
    <scope>FUNCTION</scope>
    <scope>CATALYTIC ACTIVITY</scope>
    <scope>DISRUPTION PHENOTYPE</scope>
    <scope>ACTIVE SITE</scope>
    <scope>MUTAGENESIS OF CYS-597</scope>
</reference>